<name>KYNB_BACCZ</name>
<evidence type="ECO:0000255" key="1">
    <source>
        <dbReference type="HAMAP-Rule" id="MF_01969"/>
    </source>
</evidence>
<keyword id="KW-0378">Hydrolase</keyword>
<keyword id="KW-0479">Metal-binding</keyword>
<keyword id="KW-0823">Tryptophan catabolism</keyword>
<keyword id="KW-0862">Zinc</keyword>
<protein>
    <recommendedName>
        <fullName evidence="1">Kynurenine formamidase</fullName>
        <shortName evidence="1">KFA</shortName>
        <shortName evidence="1">KFase</shortName>
        <ecNumber evidence="1">3.5.1.9</ecNumber>
    </recommendedName>
    <alternativeName>
        <fullName evidence="1">Arylformamidase</fullName>
    </alternativeName>
    <alternativeName>
        <fullName evidence="1">N-formylkynurenine formamidase</fullName>
        <shortName evidence="1">FKF</shortName>
    </alternativeName>
</protein>
<proteinExistence type="inferred from homology"/>
<gene>
    <name evidence="1" type="primary">kynB</name>
    <name type="ordered locus">BCE33L2487</name>
</gene>
<dbReference type="EC" id="3.5.1.9" evidence="1"/>
<dbReference type="EMBL" id="CP000001">
    <property type="protein sequence ID" value="AAU17772.1"/>
    <property type="molecule type" value="Genomic_DNA"/>
</dbReference>
<dbReference type="RefSeq" id="WP_000858065.1">
    <property type="nucleotide sequence ID" value="NC_006274.1"/>
</dbReference>
<dbReference type="SMR" id="Q63AJ1"/>
<dbReference type="KEGG" id="bcz:BCE33L2487"/>
<dbReference type="PATRIC" id="fig|288681.22.peg.2988"/>
<dbReference type="UniPathway" id="UPA00333">
    <property type="reaction ID" value="UER00454"/>
</dbReference>
<dbReference type="Proteomes" id="UP000002612">
    <property type="component" value="Chromosome"/>
</dbReference>
<dbReference type="GO" id="GO:0004061">
    <property type="term" value="F:arylformamidase activity"/>
    <property type="evidence" value="ECO:0000250"/>
    <property type="project" value="UniProtKB"/>
</dbReference>
<dbReference type="GO" id="GO:0004328">
    <property type="term" value="F:formamidase activity"/>
    <property type="evidence" value="ECO:0007669"/>
    <property type="project" value="InterPro"/>
</dbReference>
<dbReference type="GO" id="GO:0008270">
    <property type="term" value="F:zinc ion binding"/>
    <property type="evidence" value="ECO:0007669"/>
    <property type="project" value="UniProtKB-UniRule"/>
</dbReference>
<dbReference type="GO" id="GO:0043420">
    <property type="term" value="P:anthranilate metabolic process"/>
    <property type="evidence" value="ECO:0000250"/>
    <property type="project" value="UniProtKB"/>
</dbReference>
<dbReference type="GO" id="GO:0019441">
    <property type="term" value="P:L-tryptophan catabolic process to kynurenine"/>
    <property type="evidence" value="ECO:0000250"/>
    <property type="project" value="UniProtKB"/>
</dbReference>
<dbReference type="FunFam" id="3.50.30.50:FF:000001">
    <property type="entry name" value="Kynurenine formamidase"/>
    <property type="match status" value="1"/>
</dbReference>
<dbReference type="Gene3D" id="3.50.30.50">
    <property type="entry name" value="Putative cyclase"/>
    <property type="match status" value="1"/>
</dbReference>
<dbReference type="HAMAP" id="MF_01969">
    <property type="entry name" value="KynB"/>
    <property type="match status" value="1"/>
</dbReference>
<dbReference type="InterPro" id="IPR007325">
    <property type="entry name" value="KFase/CYL"/>
</dbReference>
<dbReference type="InterPro" id="IPR037175">
    <property type="entry name" value="KFase_sf"/>
</dbReference>
<dbReference type="InterPro" id="IPR017484">
    <property type="entry name" value="Kynurenine_formamidase_bac"/>
</dbReference>
<dbReference type="NCBIfam" id="TIGR03035">
    <property type="entry name" value="trp_arylform"/>
    <property type="match status" value="1"/>
</dbReference>
<dbReference type="PANTHER" id="PTHR31118">
    <property type="entry name" value="CYCLASE-LIKE PROTEIN 2"/>
    <property type="match status" value="1"/>
</dbReference>
<dbReference type="PANTHER" id="PTHR31118:SF32">
    <property type="entry name" value="KYNURENINE FORMAMIDASE"/>
    <property type="match status" value="1"/>
</dbReference>
<dbReference type="Pfam" id="PF04199">
    <property type="entry name" value="Cyclase"/>
    <property type="match status" value="1"/>
</dbReference>
<dbReference type="SUPFAM" id="SSF102198">
    <property type="entry name" value="Putative cyclase"/>
    <property type="match status" value="1"/>
</dbReference>
<comment type="function">
    <text evidence="1">Catalyzes the hydrolysis of N-formyl-L-kynurenine to L-kynurenine, the second step in the kynurenine pathway of tryptophan degradation.</text>
</comment>
<comment type="catalytic activity">
    <reaction evidence="1">
        <text>N-formyl-L-kynurenine + H2O = L-kynurenine + formate + H(+)</text>
        <dbReference type="Rhea" id="RHEA:13009"/>
        <dbReference type="ChEBI" id="CHEBI:15377"/>
        <dbReference type="ChEBI" id="CHEBI:15378"/>
        <dbReference type="ChEBI" id="CHEBI:15740"/>
        <dbReference type="ChEBI" id="CHEBI:57959"/>
        <dbReference type="ChEBI" id="CHEBI:58629"/>
        <dbReference type="EC" id="3.5.1.9"/>
    </reaction>
</comment>
<comment type="cofactor">
    <cofactor evidence="1">
        <name>Zn(2+)</name>
        <dbReference type="ChEBI" id="CHEBI:29105"/>
    </cofactor>
    <text evidence="1">Binds 2 zinc ions per subunit.</text>
</comment>
<comment type="pathway">
    <text evidence="1">Amino-acid degradation; L-tryptophan degradation via kynurenine pathway; L-kynurenine from L-tryptophan: step 2/2.</text>
</comment>
<comment type="subunit">
    <text evidence="1">Homodimer.</text>
</comment>
<comment type="similarity">
    <text evidence="1">Belongs to the Cyclase 1 superfamily. KynB family.</text>
</comment>
<accession>Q63AJ1</accession>
<feature type="chain" id="PRO_0000362092" description="Kynurenine formamidase">
    <location>
        <begin position="1"/>
        <end position="209"/>
    </location>
</feature>
<feature type="active site" description="Proton donor/acceptor" evidence="1">
    <location>
        <position position="60"/>
    </location>
</feature>
<feature type="binding site" evidence="1">
    <location>
        <position position="20"/>
    </location>
    <ligand>
        <name>substrate</name>
    </ligand>
</feature>
<feature type="binding site" evidence="1">
    <location>
        <position position="50"/>
    </location>
    <ligand>
        <name>Zn(2+)</name>
        <dbReference type="ChEBI" id="CHEBI:29105"/>
        <label>1</label>
    </ligand>
</feature>
<feature type="binding site" evidence="1">
    <location>
        <position position="54"/>
    </location>
    <ligand>
        <name>Zn(2+)</name>
        <dbReference type="ChEBI" id="CHEBI:29105"/>
        <label>1</label>
    </ligand>
</feature>
<feature type="binding site" evidence="1">
    <location>
        <position position="56"/>
    </location>
    <ligand>
        <name>Zn(2+)</name>
        <dbReference type="ChEBI" id="CHEBI:29105"/>
        <label>1</label>
    </ligand>
</feature>
<feature type="binding site" evidence="1">
    <location>
        <position position="56"/>
    </location>
    <ligand>
        <name>Zn(2+)</name>
        <dbReference type="ChEBI" id="CHEBI:29105"/>
        <label>2</label>
    </ligand>
</feature>
<feature type="binding site" evidence="1">
    <location>
        <position position="161"/>
    </location>
    <ligand>
        <name>Zn(2+)</name>
        <dbReference type="ChEBI" id="CHEBI:29105"/>
        <label>2</label>
    </ligand>
</feature>
<feature type="binding site" evidence="1">
    <location>
        <position position="173"/>
    </location>
    <ligand>
        <name>Zn(2+)</name>
        <dbReference type="ChEBI" id="CHEBI:29105"/>
        <label>1</label>
    </ligand>
</feature>
<feature type="binding site" evidence="1">
    <location>
        <position position="173"/>
    </location>
    <ligand>
        <name>Zn(2+)</name>
        <dbReference type="ChEBI" id="CHEBI:29105"/>
        <label>2</label>
    </ligand>
</feature>
<sequence length="209" mass="23075">MKTSEWIDISQPLNNDIATWPGDTPFSYEVSWSKEESGSVNVGKLTMSIHTGTHIDAPFHFDNEGKKVIDLDVQVYVGPARIIDVSNLESIGKKELENFHLEGVERLLLRTSSHGKANEFPDVIPHLRADIAPFLSEKGIRLIGVDVPSVDPLDDKELAAHHQLFKHGIHILENVVLDHVADGDYELIALPLALSDADGSPVRAVIRPI</sequence>
<organism>
    <name type="scientific">Bacillus cereus (strain ZK / E33L)</name>
    <dbReference type="NCBI Taxonomy" id="288681"/>
    <lineage>
        <taxon>Bacteria</taxon>
        <taxon>Bacillati</taxon>
        <taxon>Bacillota</taxon>
        <taxon>Bacilli</taxon>
        <taxon>Bacillales</taxon>
        <taxon>Bacillaceae</taxon>
        <taxon>Bacillus</taxon>
        <taxon>Bacillus cereus group</taxon>
    </lineage>
</organism>
<reference key="1">
    <citation type="journal article" date="2006" name="J. Bacteriol.">
        <title>Pathogenomic sequence analysis of Bacillus cereus and Bacillus thuringiensis isolates closely related to Bacillus anthracis.</title>
        <authorList>
            <person name="Han C.S."/>
            <person name="Xie G."/>
            <person name="Challacombe J.F."/>
            <person name="Altherr M.R."/>
            <person name="Bhotika S.S."/>
            <person name="Bruce D."/>
            <person name="Campbell C.S."/>
            <person name="Campbell M.L."/>
            <person name="Chen J."/>
            <person name="Chertkov O."/>
            <person name="Cleland C."/>
            <person name="Dimitrijevic M."/>
            <person name="Doggett N.A."/>
            <person name="Fawcett J.J."/>
            <person name="Glavina T."/>
            <person name="Goodwin L.A."/>
            <person name="Hill K.K."/>
            <person name="Hitchcock P."/>
            <person name="Jackson P.J."/>
            <person name="Keim P."/>
            <person name="Kewalramani A.R."/>
            <person name="Longmire J."/>
            <person name="Lucas S."/>
            <person name="Malfatti S."/>
            <person name="McMurry K."/>
            <person name="Meincke L.J."/>
            <person name="Misra M."/>
            <person name="Moseman B.L."/>
            <person name="Mundt M."/>
            <person name="Munk A.C."/>
            <person name="Okinaka R.T."/>
            <person name="Parson-Quintana B."/>
            <person name="Reilly L.P."/>
            <person name="Richardson P."/>
            <person name="Robinson D.L."/>
            <person name="Rubin E."/>
            <person name="Saunders E."/>
            <person name="Tapia R."/>
            <person name="Tesmer J.G."/>
            <person name="Thayer N."/>
            <person name="Thompson L.S."/>
            <person name="Tice H."/>
            <person name="Ticknor L.O."/>
            <person name="Wills P.L."/>
            <person name="Brettin T.S."/>
            <person name="Gilna P."/>
        </authorList>
    </citation>
    <scope>NUCLEOTIDE SEQUENCE [LARGE SCALE GENOMIC DNA]</scope>
    <source>
        <strain>ZK / E33L</strain>
    </source>
</reference>